<dbReference type="EC" id="2.7.1.170" evidence="1"/>
<dbReference type="EMBL" id="AL646052">
    <property type="protein sequence ID" value="CAD14023.1"/>
    <property type="status" value="ALT_INIT"/>
    <property type="molecule type" value="Genomic_DNA"/>
</dbReference>
<dbReference type="SMR" id="Q8Y241"/>
<dbReference type="STRING" id="267608.RSc0495"/>
<dbReference type="EnsemblBacteria" id="CAD14023">
    <property type="protein sequence ID" value="CAD14023"/>
    <property type="gene ID" value="RSc0495"/>
</dbReference>
<dbReference type="KEGG" id="rso:RSc0495"/>
<dbReference type="eggNOG" id="COG2377">
    <property type="taxonomic scope" value="Bacteria"/>
</dbReference>
<dbReference type="HOGENOM" id="CLU_038782_0_0_4"/>
<dbReference type="UniPathway" id="UPA00343"/>
<dbReference type="UniPathway" id="UPA00544"/>
<dbReference type="Proteomes" id="UP000001436">
    <property type="component" value="Chromosome"/>
</dbReference>
<dbReference type="GO" id="GO:0005524">
    <property type="term" value="F:ATP binding"/>
    <property type="evidence" value="ECO:0007669"/>
    <property type="project" value="UniProtKB-UniRule"/>
</dbReference>
<dbReference type="GO" id="GO:0016301">
    <property type="term" value="F:kinase activity"/>
    <property type="evidence" value="ECO:0007669"/>
    <property type="project" value="UniProtKB-KW"/>
</dbReference>
<dbReference type="GO" id="GO:0016773">
    <property type="term" value="F:phosphotransferase activity, alcohol group as acceptor"/>
    <property type="evidence" value="ECO:0007669"/>
    <property type="project" value="UniProtKB-UniRule"/>
</dbReference>
<dbReference type="GO" id="GO:0097175">
    <property type="term" value="P:1,6-anhydro-N-acetyl-beta-muramic acid catabolic process"/>
    <property type="evidence" value="ECO:0007669"/>
    <property type="project" value="UniProtKB-UniRule"/>
</dbReference>
<dbReference type="GO" id="GO:0006040">
    <property type="term" value="P:amino sugar metabolic process"/>
    <property type="evidence" value="ECO:0007669"/>
    <property type="project" value="InterPro"/>
</dbReference>
<dbReference type="GO" id="GO:0009254">
    <property type="term" value="P:peptidoglycan turnover"/>
    <property type="evidence" value="ECO:0007669"/>
    <property type="project" value="UniProtKB-UniRule"/>
</dbReference>
<dbReference type="CDD" id="cd24050">
    <property type="entry name" value="ASKHA_NBD_ANMK"/>
    <property type="match status" value="1"/>
</dbReference>
<dbReference type="Gene3D" id="3.30.420.40">
    <property type="match status" value="2"/>
</dbReference>
<dbReference type="HAMAP" id="MF_01270">
    <property type="entry name" value="AnhMurNAc_kinase"/>
    <property type="match status" value="1"/>
</dbReference>
<dbReference type="InterPro" id="IPR005338">
    <property type="entry name" value="Anhydro_N_Ac-Mur_kinase"/>
</dbReference>
<dbReference type="InterPro" id="IPR043129">
    <property type="entry name" value="ATPase_NBD"/>
</dbReference>
<dbReference type="NCBIfam" id="NF007139">
    <property type="entry name" value="PRK09585.1-3"/>
    <property type="match status" value="1"/>
</dbReference>
<dbReference type="PANTHER" id="PTHR30605">
    <property type="entry name" value="ANHYDRO-N-ACETYLMURAMIC ACID KINASE"/>
    <property type="match status" value="1"/>
</dbReference>
<dbReference type="PANTHER" id="PTHR30605:SF0">
    <property type="entry name" value="ANHYDRO-N-ACETYLMURAMIC ACID KINASE"/>
    <property type="match status" value="1"/>
</dbReference>
<dbReference type="Pfam" id="PF03702">
    <property type="entry name" value="AnmK"/>
    <property type="match status" value="1"/>
</dbReference>
<dbReference type="SUPFAM" id="SSF53067">
    <property type="entry name" value="Actin-like ATPase domain"/>
    <property type="match status" value="1"/>
</dbReference>
<protein>
    <recommendedName>
        <fullName evidence="1">Anhydro-N-acetylmuramic acid kinase</fullName>
        <ecNumber evidence="1">2.7.1.170</ecNumber>
    </recommendedName>
    <alternativeName>
        <fullName evidence="1">AnhMurNAc kinase</fullName>
    </alternativeName>
</protein>
<evidence type="ECO:0000255" key="1">
    <source>
        <dbReference type="HAMAP-Rule" id="MF_01270"/>
    </source>
</evidence>
<evidence type="ECO:0000305" key="2"/>
<accession>Q8Y241</accession>
<gene>
    <name evidence="1" type="primary">anmK</name>
    <name type="ordered locus">RSc0495</name>
</gene>
<name>ANMK_RALN1</name>
<feature type="chain" id="PRO_0000250039" description="Anhydro-N-acetylmuramic acid kinase">
    <location>
        <begin position="1"/>
        <end position="382"/>
    </location>
</feature>
<feature type="binding site" evidence="1">
    <location>
        <begin position="18"/>
        <end position="25"/>
    </location>
    <ligand>
        <name>ATP</name>
        <dbReference type="ChEBI" id="CHEBI:30616"/>
    </ligand>
</feature>
<comment type="function">
    <text evidence="1">Catalyzes the specific phosphorylation of 1,6-anhydro-N-acetylmuramic acid (anhMurNAc) with the simultaneous cleavage of the 1,6-anhydro ring, generating MurNAc-6-P. Is required for the utilization of anhMurNAc either imported from the medium or derived from its own cell wall murein, and thus plays a role in cell wall recycling.</text>
</comment>
<comment type="catalytic activity">
    <reaction evidence="1">
        <text>1,6-anhydro-N-acetyl-beta-muramate + ATP + H2O = N-acetyl-D-muramate 6-phosphate + ADP + H(+)</text>
        <dbReference type="Rhea" id="RHEA:24952"/>
        <dbReference type="ChEBI" id="CHEBI:15377"/>
        <dbReference type="ChEBI" id="CHEBI:15378"/>
        <dbReference type="ChEBI" id="CHEBI:30616"/>
        <dbReference type="ChEBI" id="CHEBI:58690"/>
        <dbReference type="ChEBI" id="CHEBI:58722"/>
        <dbReference type="ChEBI" id="CHEBI:456216"/>
        <dbReference type="EC" id="2.7.1.170"/>
    </reaction>
</comment>
<comment type="pathway">
    <text evidence="1">Amino-sugar metabolism; 1,6-anhydro-N-acetylmuramate degradation.</text>
</comment>
<comment type="pathway">
    <text evidence="1">Cell wall biogenesis; peptidoglycan recycling.</text>
</comment>
<comment type="similarity">
    <text evidence="1">Belongs to the anhydro-N-acetylmuramic acid kinase family.</text>
</comment>
<comment type="sequence caution" evidence="2">
    <conflict type="erroneous initiation">
        <sequence resource="EMBL-CDS" id="CAD14023"/>
    </conflict>
</comment>
<reference key="1">
    <citation type="journal article" date="2002" name="Nature">
        <title>Genome sequence of the plant pathogen Ralstonia solanacearum.</title>
        <authorList>
            <person name="Salanoubat M."/>
            <person name="Genin S."/>
            <person name="Artiguenave F."/>
            <person name="Gouzy J."/>
            <person name="Mangenot S."/>
            <person name="Arlat M."/>
            <person name="Billault A."/>
            <person name="Brottier P."/>
            <person name="Camus J.-C."/>
            <person name="Cattolico L."/>
            <person name="Chandler M."/>
            <person name="Choisne N."/>
            <person name="Claudel-Renard C."/>
            <person name="Cunnac S."/>
            <person name="Demange N."/>
            <person name="Gaspin C."/>
            <person name="Lavie M."/>
            <person name="Moisan A."/>
            <person name="Robert C."/>
            <person name="Saurin W."/>
            <person name="Schiex T."/>
            <person name="Siguier P."/>
            <person name="Thebault P."/>
            <person name="Whalen M."/>
            <person name="Wincker P."/>
            <person name="Levy M."/>
            <person name="Weissenbach J."/>
            <person name="Boucher C.A."/>
        </authorList>
    </citation>
    <scope>NUCLEOTIDE SEQUENCE [LARGE SCALE GENOMIC DNA]</scope>
    <source>
        <strain>ATCC BAA-1114 / GMI1000</strain>
    </source>
</reference>
<sequence length="382" mass="40965">MTTLASSISERYIGLMSGTSLDGVDGVLVDFSGPRPMLLTDAYVPFPPALRQAFFDLQSAGHNEIHREALAANALADLYAECVAQLLHESGCDPREVRAIGAHGQTIRHQPGEHDGIGYTRQTQHAAVLAERTGIDVIADFRSRDIAAGGQGAPLVPAVHRALFALPDAWRVVCNIGGIANLTVLPPQQSDARDRVLGFDCGPGNALLDYWVHAHRGEAYDRNGEWARSGWIDAALLETLRSEPFFARMPPKSTGRDLFNPTWLQQQAGDTLERIRPEDVQATLLALTADTIADAVRTHAPRTASLVVCGGGARNGALMQRLAAQLPGTLVAASDDFGVPAHQVEALAFAWLARQCVRREPGNVYHATGAAGPRVLGTIYPA</sequence>
<organism>
    <name type="scientific">Ralstonia nicotianae (strain ATCC BAA-1114 / GMI1000)</name>
    <name type="common">Ralstonia solanacearum</name>
    <dbReference type="NCBI Taxonomy" id="267608"/>
    <lineage>
        <taxon>Bacteria</taxon>
        <taxon>Pseudomonadati</taxon>
        <taxon>Pseudomonadota</taxon>
        <taxon>Betaproteobacteria</taxon>
        <taxon>Burkholderiales</taxon>
        <taxon>Burkholderiaceae</taxon>
        <taxon>Ralstonia</taxon>
        <taxon>Ralstonia solanacearum species complex</taxon>
    </lineage>
</organism>
<proteinExistence type="inferred from homology"/>
<keyword id="KW-0067">ATP-binding</keyword>
<keyword id="KW-0119">Carbohydrate metabolism</keyword>
<keyword id="KW-0418">Kinase</keyword>
<keyword id="KW-0547">Nucleotide-binding</keyword>
<keyword id="KW-1185">Reference proteome</keyword>
<keyword id="KW-0808">Transferase</keyword>